<organism>
    <name type="scientific">Halalkalibacterium halodurans (strain ATCC BAA-125 / DSM 18197 / FERM 7344 / JCM 9153 / C-125)</name>
    <name type="common">Bacillus halodurans</name>
    <dbReference type="NCBI Taxonomy" id="272558"/>
    <lineage>
        <taxon>Bacteria</taxon>
        <taxon>Bacillati</taxon>
        <taxon>Bacillota</taxon>
        <taxon>Bacilli</taxon>
        <taxon>Bacillales</taxon>
        <taxon>Bacillaceae</taxon>
        <taxon>Halalkalibacterium (ex Joshi et al. 2022)</taxon>
    </lineage>
</organism>
<name>FABZ_HALH5</name>
<proteinExistence type="inferred from homology"/>
<reference key="1">
    <citation type="journal article" date="2000" name="Nucleic Acids Res.">
        <title>Complete genome sequence of the alkaliphilic bacterium Bacillus halodurans and genomic sequence comparison with Bacillus subtilis.</title>
        <authorList>
            <person name="Takami H."/>
            <person name="Nakasone K."/>
            <person name="Takaki Y."/>
            <person name="Maeno G."/>
            <person name="Sasaki R."/>
            <person name="Masui N."/>
            <person name="Fuji F."/>
            <person name="Hirama C."/>
            <person name="Nakamura Y."/>
            <person name="Ogasawara N."/>
            <person name="Kuhara S."/>
            <person name="Horikoshi K."/>
        </authorList>
    </citation>
    <scope>NUCLEOTIDE SEQUENCE [LARGE SCALE GENOMIC DNA]</scope>
    <source>
        <strain>ATCC BAA-125 / DSM 18197 / FERM 7344 / JCM 9153 / C-125</strain>
    </source>
</reference>
<feature type="chain" id="PRO_0000091638" description="3-hydroxyacyl-[acyl-carrier-protein] dehydratase FabZ">
    <location>
        <begin position="1"/>
        <end position="140"/>
    </location>
</feature>
<feature type="active site" evidence="1">
    <location>
        <position position="48"/>
    </location>
</feature>
<evidence type="ECO:0000255" key="1">
    <source>
        <dbReference type="HAMAP-Rule" id="MF_00406"/>
    </source>
</evidence>
<keyword id="KW-0963">Cytoplasm</keyword>
<keyword id="KW-0441">Lipid A biosynthesis</keyword>
<keyword id="KW-0444">Lipid biosynthesis</keyword>
<keyword id="KW-0443">Lipid metabolism</keyword>
<keyword id="KW-0456">Lyase</keyword>
<keyword id="KW-1185">Reference proteome</keyword>
<comment type="function">
    <text evidence="1">Involved in unsaturated fatty acids biosynthesis. Catalyzes the dehydration of short chain beta-hydroxyacyl-ACPs and long chain saturated and unsaturated beta-hydroxyacyl-ACPs.</text>
</comment>
<comment type="catalytic activity">
    <reaction evidence="1">
        <text>a (3R)-hydroxyacyl-[ACP] = a (2E)-enoyl-[ACP] + H2O</text>
        <dbReference type="Rhea" id="RHEA:13097"/>
        <dbReference type="Rhea" id="RHEA-COMP:9925"/>
        <dbReference type="Rhea" id="RHEA-COMP:9945"/>
        <dbReference type="ChEBI" id="CHEBI:15377"/>
        <dbReference type="ChEBI" id="CHEBI:78784"/>
        <dbReference type="ChEBI" id="CHEBI:78827"/>
        <dbReference type="EC" id="4.2.1.59"/>
    </reaction>
</comment>
<comment type="subcellular location">
    <subcellularLocation>
        <location evidence="1">Cytoplasm</location>
    </subcellularLocation>
</comment>
<comment type="similarity">
    <text evidence="1">Belongs to the thioester dehydratase family. FabZ subfamily.</text>
</comment>
<sequence length="140" mass="15525">MLTIEDIKKIIPHRYPFLLIDRLEELEDGKRAVGIKNVTVNEDFFNGHFPDYPVMPGVLIVEALAQVGACAILNVEENKGKLAFFAGIDNCRFKEQVKPGDQLRLEVEIVRMKGPVGKGRGVASVNGKTVAETDLMFAIK</sequence>
<protein>
    <recommendedName>
        <fullName evidence="1">3-hydroxyacyl-[acyl-carrier-protein] dehydratase FabZ</fullName>
        <ecNumber evidence="1">4.2.1.59</ecNumber>
    </recommendedName>
    <alternativeName>
        <fullName evidence="1">(3R)-hydroxymyristoyl-[acyl-carrier-protein] dehydratase</fullName>
        <shortName evidence="1">(3R)-hydroxymyristoyl-ACP dehydrase</shortName>
    </alternativeName>
    <alternativeName>
        <fullName evidence="1">Beta-hydroxyacyl-ACP dehydratase</fullName>
    </alternativeName>
</protein>
<dbReference type="EC" id="4.2.1.59" evidence="1"/>
<dbReference type="EMBL" id="BA000004">
    <property type="protein sequence ID" value="BAB07454.1"/>
    <property type="molecule type" value="Genomic_DNA"/>
</dbReference>
<dbReference type="PIR" id="G84116">
    <property type="entry name" value="G84116"/>
</dbReference>
<dbReference type="RefSeq" id="WP_010899860.1">
    <property type="nucleotide sequence ID" value="NC_002570.2"/>
</dbReference>
<dbReference type="SMR" id="Q9K6J4"/>
<dbReference type="STRING" id="272558.gene:10729648"/>
<dbReference type="GeneID" id="87599284"/>
<dbReference type="KEGG" id="bha:BH3735"/>
<dbReference type="eggNOG" id="COG0764">
    <property type="taxonomic scope" value="Bacteria"/>
</dbReference>
<dbReference type="HOGENOM" id="CLU_078912_3_0_9"/>
<dbReference type="OrthoDB" id="9772788at2"/>
<dbReference type="Proteomes" id="UP000001258">
    <property type="component" value="Chromosome"/>
</dbReference>
<dbReference type="GO" id="GO:0005737">
    <property type="term" value="C:cytoplasm"/>
    <property type="evidence" value="ECO:0007669"/>
    <property type="project" value="UniProtKB-SubCell"/>
</dbReference>
<dbReference type="GO" id="GO:0016020">
    <property type="term" value="C:membrane"/>
    <property type="evidence" value="ECO:0007669"/>
    <property type="project" value="GOC"/>
</dbReference>
<dbReference type="GO" id="GO:0019171">
    <property type="term" value="F:(3R)-hydroxyacyl-[acyl-carrier-protein] dehydratase activity"/>
    <property type="evidence" value="ECO:0007669"/>
    <property type="project" value="UniProtKB-EC"/>
</dbReference>
<dbReference type="GO" id="GO:0006633">
    <property type="term" value="P:fatty acid biosynthetic process"/>
    <property type="evidence" value="ECO:0007669"/>
    <property type="project" value="UniProtKB-UniRule"/>
</dbReference>
<dbReference type="GO" id="GO:0009245">
    <property type="term" value="P:lipid A biosynthetic process"/>
    <property type="evidence" value="ECO:0007669"/>
    <property type="project" value="UniProtKB-UniRule"/>
</dbReference>
<dbReference type="CDD" id="cd01288">
    <property type="entry name" value="FabZ"/>
    <property type="match status" value="1"/>
</dbReference>
<dbReference type="FunFam" id="3.10.129.10:FF:000001">
    <property type="entry name" value="3-hydroxyacyl-[acyl-carrier-protein] dehydratase FabZ"/>
    <property type="match status" value="1"/>
</dbReference>
<dbReference type="Gene3D" id="3.10.129.10">
    <property type="entry name" value="Hotdog Thioesterase"/>
    <property type="match status" value="1"/>
</dbReference>
<dbReference type="HAMAP" id="MF_00406">
    <property type="entry name" value="FabZ"/>
    <property type="match status" value="1"/>
</dbReference>
<dbReference type="InterPro" id="IPR013114">
    <property type="entry name" value="FabA_FabZ"/>
</dbReference>
<dbReference type="InterPro" id="IPR010084">
    <property type="entry name" value="FabZ"/>
</dbReference>
<dbReference type="InterPro" id="IPR029069">
    <property type="entry name" value="HotDog_dom_sf"/>
</dbReference>
<dbReference type="NCBIfam" id="TIGR01750">
    <property type="entry name" value="fabZ"/>
    <property type="match status" value="1"/>
</dbReference>
<dbReference type="NCBIfam" id="NF000582">
    <property type="entry name" value="PRK00006.1"/>
    <property type="match status" value="1"/>
</dbReference>
<dbReference type="PANTHER" id="PTHR30272">
    <property type="entry name" value="3-HYDROXYACYL-[ACYL-CARRIER-PROTEIN] DEHYDRATASE"/>
    <property type="match status" value="1"/>
</dbReference>
<dbReference type="PANTHER" id="PTHR30272:SF1">
    <property type="entry name" value="3-HYDROXYACYL-[ACYL-CARRIER-PROTEIN] DEHYDRATASE"/>
    <property type="match status" value="1"/>
</dbReference>
<dbReference type="Pfam" id="PF07977">
    <property type="entry name" value="FabA"/>
    <property type="match status" value="1"/>
</dbReference>
<dbReference type="SUPFAM" id="SSF54637">
    <property type="entry name" value="Thioesterase/thiol ester dehydrase-isomerase"/>
    <property type="match status" value="1"/>
</dbReference>
<gene>
    <name evidence="1" type="primary">fabZ</name>
    <name type="ordered locus">BH3735</name>
</gene>
<accession>Q9K6J4</accession>